<sequence>MVSKKSVKRGLITGLIGISIYSLGMHPAQAAPSPHTPVSSDPSYKAETSVTYDPNIKSDQYGLYSKAFTGTGKVNETKEKAEKKSPAKAPYSIKSVIGSDDRTRVTNTTAYPYRAIVHISSSIGSCTGWMIGPKTVATAGHCIYDTSSGSFAGTATVSPGRNGTSYPYGSVKSTRYFIPSGWRSGNTNYDYGAIELSEPIGNTVGYFGYSYTTSSLVGTTVTISGYPGDKTAGTQWQHSGPIAISETYKLQYAMDTYGGQSGSPVFEQSSSRTNCSGPCSLAVHTNGVYGGSSYNRGTRITKEVFDNLTNWKNSAQ</sequence>
<protein>
    <recommendedName>
        <fullName>Glutamyl endopeptidase</fullName>
        <ecNumber>3.4.21.19</ecNumber>
    </recommendedName>
    <alternativeName>
        <fullName>Glutamate-specific endopeptidase</fullName>
        <shortName>GSE</shortName>
    </alternativeName>
</protein>
<proteinExistence type="evidence at protein level"/>
<gene>
    <name type="primary">blaSE</name>
    <name type="synonym">mpr</name>
    <name type="ordered locus">BLi00340</name>
    <name type="ordered locus">BL01804</name>
</gene>
<reference key="1">
    <citation type="journal article" date="1992" name="J. Biol. Chem.">
        <title>Purification, characterization, cloning, and expression of a glutamic acid-specific protease from Bacillus licheniformis ATCC 14580.</title>
        <authorList>
            <person name="Kakudo S."/>
            <person name="Kikuchi N."/>
            <person name="Kitadokoro K."/>
            <person name="Fujiwara T."/>
            <person name="Nakamura E."/>
            <person name="Okamoto H."/>
            <person name="Shin M."/>
            <person name="Tamaki M."/>
            <person name="Teraoka H."/>
            <person name="Tsuzuki H."/>
            <person name="Yoshida N."/>
        </authorList>
    </citation>
    <scope>NUCLEOTIDE SEQUENCE [GENOMIC DNA]</scope>
    <scope>PARTIAL PROTEIN SEQUENCE</scope>
</reference>
<reference key="2">
    <citation type="journal article" date="2004" name="J. Mol. Microbiol. Biotechnol.">
        <title>The complete genome sequence of Bacillus licheniformis DSM13, an organism with great industrial potential.</title>
        <authorList>
            <person name="Veith B."/>
            <person name="Herzberg C."/>
            <person name="Steckel S."/>
            <person name="Feesche J."/>
            <person name="Maurer K.H."/>
            <person name="Ehrenreich P."/>
            <person name="Baeumer S."/>
            <person name="Henne A."/>
            <person name="Liesegang H."/>
            <person name="Merkl R."/>
            <person name="Ehrenreich A."/>
            <person name="Gottschalk G."/>
        </authorList>
    </citation>
    <scope>NUCLEOTIDE SEQUENCE [LARGE SCALE GENOMIC DNA]</scope>
    <source>
        <strain>ATCC 14580 / DSM 13 / JCM 2505 / CCUG 7422 / NBRC 12200 / NCIMB 9375 / NCTC 10341 / NRRL NRS-1264 / Gibson 46</strain>
    </source>
</reference>
<reference key="3">
    <citation type="journal article" date="2004" name="Genome Biol.">
        <title>Complete genome sequence of the industrial bacterium Bacillus licheniformis and comparisons with closely related Bacillus species.</title>
        <authorList>
            <person name="Rey M.W."/>
            <person name="Ramaiya P."/>
            <person name="Nelson B.A."/>
            <person name="Brody-Karpin S.D."/>
            <person name="Zaretsky E.J."/>
            <person name="Tang M."/>
            <person name="Lopez de Leon A."/>
            <person name="Xiang H."/>
            <person name="Gusti V."/>
            <person name="Clausen I.G."/>
            <person name="Olsen P.B."/>
            <person name="Rasmussen M.D."/>
            <person name="Andersen J.T."/>
            <person name="Joergensen P.L."/>
            <person name="Larsen T.S."/>
            <person name="Sorokin A."/>
            <person name="Bolotin A."/>
            <person name="Lapidus A."/>
            <person name="Galleron N."/>
            <person name="Ehrlich S.D."/>
            <person name="Berka R.M."/>
        </authorList>
    </citation>
    <scope>NUCLEOTIDE SEQUENCE [LARGE SCALE GENOMIC DNA]</scope>
    <source>
        <strain>ATCC 14580 / DSM 13 / JCM 2505 / CCUG 7422 / NBRC 12200 / NCIMB 9375 / NCTC 10341 / NRRL NRS-1264 / Gibson 46</strain>
    </source>
</reference>
<reference key="4">
    <citation type="journal article" date="1992" name="Eur. J. Biochem.">
        <title>Isolation and amino acid sequence of a glutamic acid specific endopeptidase from Bacillus licheniformis.</title>
        <authorList>
            <person name="Svendsen I."/>
            <person name="Breddam K."/>
        </authorList>
    </citation>
    <scope>PROTEIN SEQUENCE OF 95-316</scope>
</reference>
<dbReference type="EC" id="3.4.21.19"/>
<dbReference type="EMBL" id="D10060">
    <property type="protein sequence ID" value="BAA00949.1"/>
    <property type="molecule type" value="Genomic_DNA"/>
</dbReference>
<dbReference type="EMBL" id="AE017333">
    <property type="protein sequence ID" value="AAU39298.1"/>
    <property type="molecule type" value="Genomic_DNA"/>
</dbReference>
<dbReference type="EMBL" id="CP000002">
    <property type="protein sequence ID" value="AAU21945.1"/>
    <property type="molecule type" value="Genomic_DNA"/>
</dbReference>
<dbReference type="PIR" id="A45134">
    <property type="entry name" value="A45134"/>
</dbReference>
<dbReference type="SMR" id="P80057"/>
<dbReference type="STRING" id="279010.BL01804"/>
<dbReference type="MEROPS" id="S01.271"/>
<dbReference type="KEGG" id="bld:BLi00340"/>
<dbReference type="KEGG" id="bli:BL01804"/>
<dbReference type="eggNOG" id="COG3591">
    <property type="taxonomic scope" value="Bacteria"/>
</dbReference>
<dbReference type="HOGENOM" id="CLU_073589_0_2_9"/>
<dbReference type="Proteomes" id="UP000000606">
    <property type="component" value="Chromosome"/>
</dbReference>
<dbReference type="GO" id="GO:0005576">
    <property type="term" value="C:extracellular region"/>
    <property type="evidence" value="ECO:0007669"/>
    <property type="project" value="UniProtKB-SubCell"/>
</dbReference>
<dbReference type="GO" id="GO:0004252">
    <property type="term" value="F:serine-type endopeptidase activity"/>
    <property type="evidence" value="ECO:0007669"/>
    <property type="project" value="InterPro"/>
</dbReference>
<dbReference type="GO" id="GO:0006508">
    <property type="term" value="P:proteolysis"/>
    <property type="evidence" value="ECO:0007669"/>
    <property type="project" value="UniProtKB-KW"/>
</dbReference>
<dbReference type="Gene3D" id="2.40.10.10">
    <property type="entry name" value="Trypsin-like serine proteases"/>
    <property type="match status" value="2"/>
</dbReference>
<dbReference type="InterPro" id="IPR050966">
    <property type="entry name" value="Glutamyl_endopeptidase"/>
</dbReference>
<dbReference type="InterPro" id="IPR009003">
    <property type="entry name" value="Peptidase_S1_PA"/>
</dbReference>
<dbReference type="InterPro" id="IPR043504">
    <property type="entry name" value="Peptidase_S1_PA_chymotrypsin"/>
</dbReference>
<dbReference type="InterPro" id="IPR008256">
    <property type="entry name" value="Peptidase_S1B"/>
</dbReference>
<dbReference type="InterPro" id="IPR001254">
    <property type="entry name" value="Trypsin_dom"/>
</dbReference>
<dbReference type="InterPro" id="IPR028301">
    <property type="entry name" value="V8_his_AS"/>
</dbReference>
<dbReference type="InterPro" id="IPR000126">
    <property type="entry name" value="V8_ser_AS"/>
</dbReference>
<dbReference type="PANTHER" id="PTHR15462">
    <property type="entry name" value="SERINE PROTEASE"/>
    <property type="match status" value="1"/>
</dbReference>
<dbReference type="PANTHER" id="PTHR15462:SF8">
    <property type="entry name" value="SERINE PROTEASE"/>
    <property type="match status" value="1"/>
</dbReference>
<dbReference type="Pfam" id="PF00089">
    <property type="entry name" value="Trypsin"/>
    <property type="match status" value="1"/>
</dbReference>
<dbReference type="PRINTS" id="PR00839">
    <property type="entry name" value="V8PROTEASE"/>
</dbReference>
<dbReference type="SUPFAM" id="SSF50494">
    <property type="entry name" value="Trypsin-like serine proteases"/>
    <property type="match status" value="1"/>
</dbReference>
<dbReference type="PROSITE" id="PS00672">
    <property type="entry name" value="V8_HIS"/>
    <property type="match status" value="1"/>
</dbReference>
<dbReference type="PROSITE" id="PS00673">
    <property type="entry name" value="V8_SER"/>
    <property type="match status" value="1"/>
</dbReference>
<name>GSEP_BACLD</name>
<organism>
    <name type="scientific">Bacillus licheniformis (strain ATCC 14580 / DSM 13 / JCM 2505 / CCUG 7422 / NBRC 12200 / NCIMB 9375 / NCTC 10341 / NRRL NRS-1264 / Gibson 46)</name>
    <dbReference type="NCBI Taxonomy" id="279010"/>
    <lineage>
        <taxon>Bacteria</taxon>
        <taxon>Bacillati</taxon>
        <taxon>Bacillota</taxon>
        <taxon>Bacilli</taxon>
        <taxon>Bacillales</taxon>
        <taxon>Bacillaceae</taxon>
        <taxon>Bacillus</taxon>
    </lineage>
</organism>
<comment type="function">
    <text>Specific for hydrolysis of peptide bonds on the carboxyl side of acidic amino acid residues, with a strong preference for Glu.</text>
</comment>
<comment type="catalytic activity">
    <reaction evidence="2">
        <text>Preferential cleavage: Glu-|-Xaa, Asp-|-Xaa.</text>
        <dbReference type="EC" id="3.4.21.19"/>
    </reaction>
</comment>
<comment type="subcellular location">
    <subcellularLocation>
        <location>Secreted</location>
    </subcellularLocation>
</comment>
<comment type="similarity">
    <text evidence="4">Belongs to the peptidase S1B family.</text>
</comment>
<accession>P80057</accession>
<accession>Q65NR6</accession>
<feature type="signal peptide" evidence="1">
    <location>
        <begin position="1"/>
        <end position="30"/>
    </location>
</feature>
<feature type="propeptide" id="PRO_0000026900" evidence="3">
    <location>
        <begin position="31"/>
        <end position="94"/>
    </location>
</feature>
<feature type="chain" id="PRO_0000026901" description="Glutamyl endopeptidase">
    <location>
        <begin position="95"/>
        <end position="316"/>
    </location>
</feature>
<feature type="active site" description="Charge relay system" evidence="2">
    <location>
        <position position="141"/>
    </location>
</feature>
<feature type="active site" description="Charge relay system" evidence="2">
    <location>
        <position position="261"/>
    </location>
</feature>
<feature type="disulfide bond">
    <location>
        <begin position="126"/>
        <end position="142"/>
    </location>
</feature>
<feature type="disulfide bond">
    <location>
        <begin position="275"/>
        <end position="279"/>
    </location>
</feature>
<keyword id="KW-0903">Direct protein sequencing</keyword>
<keyword id="KW-1015">Disulfide bond</keyword>
<keyword id="KW-0378">Hydrolase</keyword>
<keyword id="KW-0645">Protease</keyword>
<keyword id="KW-1185">Reference proteome</keyword>
<keyword id="KW-0964">Secreted</keyword>
<keyword id="KW-0720">Serine protease</keyword>
<keyword id="KW-0732">Signal</keyword>
<evidence type="ECO:0000255" key="1"/>
<evidence type="ECO:0000255" key="2">
    <source>
        <dbReference type="PROSITE-ProRule" id="PRU10083"/>
    </source>
</evidence>
<evidence type="ECO:0000269" key="3">
    <source>
    </source>
</evidence>
<evidence type="ECO:0000305" key="4"/>